<reference key="1">
    <citation type="submission" date="2008-03" db="EMBL/GenBank/DDBJ databases">
        <title>Complete sequence of Thermoproteus neutrophilus V24Sta.</title>
        <authorList>
            <consortium name="US DOE Joint Genome Institute"/>
            <person name="Copeland A."/>
            <person name="Lucas S."/>
            <person name="Lapidus A."/>
            <person name="Glavina del Rio T."/>
            <person name="Dalin E."/>
            <person name="Tice H."/>
            <person name="Bruce D."/>
            <person name="Goodwin L."/>
            <person name="Pitluck S."/>
            <person name="Sims D."/>
            <person name="Brettin T."/>
            <person name="Detter J.C."/>
            <person name="Han C."/>
            <person name="Kuske C.R."/>
            <person name="Schmutz J."/>
            <person name="Larimer F."/>
            <person name="Land M."/>
            <person name="Hauser L."/>
            <person name="Kyrpides N."/>
            <person name="Mikhailova N."/>
            <person name="Biddle J.F."/>
            <person name="Zhang Z."/>
            <person name="Fitz-Gibbon S.T."/>
            <person name="Lowe T.M."/>
            <person name="Saltikov C."/>
            <person name="House C.H."/>
            <person name="Richardson P."/>
        </authorList>
    </citation>
    <scope>NUCLEOTIDE SEQUENCE [LARGE SCALE GENOMIC DNA]</scope>
    <source>
        <strain>DSM 2338 / JCM 9278 / NBRC 100436 / V24Sta</strain>
    </source>
</reference>
<dbReference type="EMBL" id="CP001014">
    <property type="protein sequence ID" value="ACB40608.1"/>
    <property type="molecule type" value="Genomic_DNA"/>
</dbReference>
<dbReference type="RefSeq" id="WP_012351027.1">
    <property type="nucleotide sequence ID" value="NC_010525.1"/>
</dbReference>
<dbReference type="SMR" id="B1YAF9"/>
<dbReference type="STRING" id="444157.Tneu_1686"/>
<dbReference type="GeneID" id="6165137"/>
<dbReference type="KEGG" id="tne:Tneu_1686"/>
<dbReference type="eggNOG" id="arCOG04108">
    <property type="taxonomic scope" value="Archaea"/>
</dbReference>
<dbReference type="HOGENOM" id="CLU_199465_0_0_2"/>
<dbReference type="OrthoDB" id="5718at2157"/>
<dbReference type="Proteomes" id="UP000001694">
    <property type="component" value="Chromosome"/>
</dbReference>
<dbReference type="GO" id="GO:1990904">
    <property type="term" value="C:ribonucleoprotein complex"/>
    <property type="evidence" value="ECO:0007669"/>
    <property type="project" value="UniProtKB-KW"/>
</dbReference>
<dbReference type="GO" id="GO:0005840">
    <property type="term" value="C:ribosome"/>
    <property type="evidence" value="ECO:0007669"/>
    <property type="project" value="UniProtKB-KW"/>
</dbReference>
<dbReference type="GO" id="GO:0003735">
    <property type="term" value="F:structural constituent of ribosome"/>
    <property type="evidence" value="ECO:0007669"/>
    <property type="project" value="InterPro"/>
</dbReference>
<dbReference type="GO" id="GO:0008270">
    <property type="term" value="F:zinc ion binding"/>
    <property type="evidence" value="ECO:0007669"/>
    <property type="project" value="UniProtKB-UniRule"/>
</dbReference>
<dbReference type="GO" id="GO:0006412">
    <property type="term" value="P:translation"/>
    <property type="evidence" value="ECO:0007669"/>
    <property type="project" value="UniProtKB-UniRule"/>
</dbReference>
<dbReference type="FunFam" id="2.20.25.100:FF:000002">
    <property type="entry name" value="30S ribosomal protein S27e"/>
    <property type="match status" value="1"/>
</dbReference>
<dbReference type="Gene3D" id="2.20.25.100">
    <property type="entry name" value="Zn-binding ribosomal proteins"/>
    <property type="match status" value="1"/>
</dbReference>
<dbReference type="HAMAP" id="MF_00371">
    <property type="entry name" value="Ribosomal_eS27"/>
    <property type="match status" value="1"/>
</dbReference>
<dbReference type="InterPro" id="IPR000592">
    <property type="entry name" value="Ribosomal_eS27"/>
</dbReference>
<dbReference type="InterPro" id="IPR023407">
    <property type="entry name" value="Ribosomal_eS27_Zn-bd_dom_sf"/>
</dbReference>
<dbReference type="InterPro" id="IPR011332">
    <property type="entry name" value="Ribosomal_zn-bd"/>
</dbReference>
<dbReference type="NCBIfam" id="NF001629">
    <property type="entry name" value="PRK00415.1"/>
    <property type="match status" value="1"/>
</dbReference>
<dbReference type="PANTHER" id="PTHR11594">
    <property type="entry name" value="40S RIBOSOMAL PROTEIN S27"/>
    <property type="match status" value="1"/>
</dbReference>
<dbReference type="Pfam" id="PF01667">
    <property type="entry name" value="Ribosomal_S27e"/>
    <property type="match status" value="1"/>
</dbReference>
<dbReference type="SUPFAM" id="SSF57829">
    <property type="entry name" value="Zn-binding ribosomal proteins"/>
    <property type="match status" value="1"/>
</dbReference>
<dbReference type="PROSITE" id="PS01168">
    <property type="entry name" value="RIBOSOMAL_S27E"/>
    <property type="match status" value="1"/>
</dbReference>
<gene>
    <name evidence="1" type="primary">rps27e</name>
    <name type="ordered locus">Tneu_1686</name>
</gene>
<accession>B1YAF9</accession>
<name>RS27_PYRNV</name>
<keyword id="KW-0479">Metal-binding</keyword>
<keyword id="KW-0687">Ribonucleoprotein</keyword>
<keyword id="KW-0689">Ribosomal protein</keyword>
<keyword id="KW-0862">Zinc</keyword>
<keyword id="KW-0863">Zinc-finger</keyword>
<comment type="cofactor">
    <cofactor evidence="1">
        <name>Zn(2+)</name>
        <dbReference type="ChEBI" id="CHEBI:29105"/>
    </cofactor>
    <text evidence="1">Binds 1 zinc ion per subunit.</text>
</comment>
<comment type="subunit">
    <text evidence="1">Part of the 30S ribosomal subunit.</text>
</comment>
<comment type="similarity">
    <text evidence="1">Belongs to the eukaryotic ribosomal protein eS27 family.</text>
</comment>
<sequence>MPARFGKTLIPQPRSRFIKVRCPDCGNEQVTFSHAAMVVRCLVCGRVLAQPTGGKARLAGHVIKVLE</sequence>
<evidence type="ECO:0000255" key="1">
    <source>
        <dbReference type="HAMAP-Rule" id="MF_00371"/>
    </source>
</evidence>
<evidence type="ECO:0000305" key="2"/>
<organism>
    <name type="scientific">Pyrobaculum neutrophilum (strain DSM 2338 / JCM 9278 / NBRC 100436 / V24Sta)</name>
    <name type="common">Thermoproteus neutrophilus</name>
    <dbReference type="NCBI Taxonomy" id="444157"/>
    <lineage>
        <taxon>Archaea</taxon>
        <taxon>Thermoproteota</taxon>
        <taxon>Thermoprotei</taxon>
        <taxon>Thermoproteales</taxon>
        <taxon>Thermoproteaceae</taxon>
        <taxon>Pyrobaculum</taxon>
    </lineage>
</organism>
<proteinExistence type="inferred from homology"/>
<feature type="chain" id="PRO_1000121521" description="Small ribosomal subunit protein eS27">
    <location>
        <begin position="1"/>
        <end position="67"/>
    </location>
</feature>
<feature type="zinc finger region" description="C4-type" evidence="1">
    <location>
        <begin position="22"/>
        <end position="44"/>
    </location>
</feature>
<feature type="binding site" evidence="1">
    <location>
        <position position="22"/>
    </location>
    <ligand>
        <name>Zn(2+)</name>
        <dbReference type="ChEBI" id="CHEBI:29105"/>
    </ligand>
</feature>
<feature type="binding site" evidence="1">
    <location>
        <position position="25"/>
    </location>
    <ligand>
        <name>Zn(2+)</name>
        <dbReference type="ChEBI" id="CHEBI:29105"/>
    </ligand>
</feature>
<feature type="binding site" evidence="1">
    <location>
        <position position="41"/>
    </location>
    <ligand>
        <name>Zn(2+)</name>
        <dbReference type="ChEBI" id="CHEBI:29105"/>
    </ligand>
</feature>
<feature type="binding site" evidence="1">
    <location>
        <position position="44"/>
    </location>
    <ligand>
        <name>Zn(2+)</name>
        <dbReference type="ChEBI" id="CHEBI:29105"/>
    </ligand>
</feature>
<protein>
    <recommendedName>
        <fullName evidence="1">Small ribosomal subunit protein eS27</fullName>
    </recommendedName>
    <alternativeName>
        <fullName evidence="2">30S ribosomal protein S27e</fullName>
    </alternativeName>
</protein>